<sequence length="505" mass="54672">MSSGQQQPPPPRRVTNVGSLLLTPQENESLFTFLGKKCVTMSSAVVQLYAADRNCMWSKKCSGVACLVKDNPQRSYFLRIFDIKDGKLLWEQELYNNFVYNSPRGYFHTFAGDTCQVALNFANEEEAKKFRKAVTDLLGRRQRKSEKRRDPPNGPNLPMATVDIKNPEITTNRFYGPQINNISHTKEKKKGKAKKKRLTKADIGTPSNFQHIGHVGWDPNTGFDLNNLDPELKNLFDMCGISEAQLKDRETSKVIYDFIEKTGGVEAVKNELRRQAPPPPPPSRGGPPPPPPPPHSSGPPPPPARGRGAPPPPPSRAPTAAPPPPPPSRPGVGAPPPPPNRMYPPPLPALPSSAPSGPPPPPPPLSVSGSVAPPPPPPPPPPPGPPPPPGLPSDGDHQVPTPAGSKAALLDQIREGAQLKKVEQNSRPVSCSGRDALLDQIRQGIQLKSVTDAPESTPPAPAPTSGIVGALMEVMQKRSKAIHSSDEDEDEDDDEDFEDDDEWED</sequence>
<evidence type="ECO:0000250" key="1">
    <source>
        <dbReference type="UniProtKB" id="O00401"/>
    </source>
</evidence>
<evidence type="ECO:0000250" key="2">
    <source>
        <dbReference type="UniProtKB" id="Q91YD9"/>
    </source>
</evidence>
<evidence type="ECO:0000255" key="3">
    <source>
        <dbReference type="PROSITE-ProRule" id="PRU00057"/>
    </source>
</evidence>
<evidence type="ECO:0000255" key="4">
    <source>
        <dbReference type="PROSITE-ProRule" id="PRU00406"/>
    </source>
</evidence>
<evidence type="ECO:0000255" key="5">
    <source>
        <dbReference type="PROSITE-ProRule" id="PRU00410"/>
    </source>
</evidence>
<evidence type="ECO:0000256" key="6">
    <source>
        <dbReference type="SAM" id="MobiDB-lite"/>
    </source>
</evidence>
<evidence type="ECO:0000269" key="7">
    <source>
    </source>
</evidence>
<evidence type="ECO:0000305" key="8"/>
<name>WASL_BOVIN</name>
<proteinExistence type="evidence at protein level"/>
<comment type="function">
    <text evidence="1 2 7">Regulates actin polymerization by stimulating the actin-nucleating activity of the Arp2/3 complex (PubMed:17609109). Involved in various processes, such as mitosis and cytokinesis, via its role in the regulation of actin polymerization. Together with CDC42, involved in the extension and maintenance of the formation of thin, actin-rich surface projections called filopodia. In addition to its role in the cytoplasm, also plays a role in the nucleus by regulating gene transcription, probably by promoting nuclear actin polymerization (By similarity). Binds to HSF1/HSTF1 and forms a complex on heat shock promoter elements (HSE) that negatively regulates HSP90 expression. Plays a role in dendrite spine morphogenesis (By similarity).</text>
</comment>
<comment type="subunit">
    <text evidence="1 2 7">Binds actin and the Arp2/3 complex. Interacts with CDC42 (By similarity). Interacts with FCHSD1. Interacts with FCHSD2 (By similarity). Binds to SH3 domains of GRB2. Interacts with the C-terminal SH3 domain of DNMBP (By similarity). Interacts with SNX9 (PubMed:17609109). Interacts with the WW domains of PRPF40A/FBP11. Interacts with PTK2/FAK1. Interacts with PACSIN1, PACSIN2 and PACSIN3 (By similarity). Interacts with NOSTRIN. Binds to TNK2. Interacts with SNX33. Interacts with NONO (via second RRM domain); the interaction is direct. Component of a multiprotein complex with NONO and SFPQ; associates with the complex via direct interaction with NONO (By similarity).</text>
</comment>
<comment type="interaction">
    <interactant intactId="EBI-6162776">
        <id>Q95107</id>
    </interactant>
    <interactant intactId="EBI-6162748">
        <id>A7MB62</id>
        <label>ACTR2</label>
    </interactant>
    <organismsDiffer>false</organismsDiffer>
    <experiments>2</experiments>
</comment>
<comment type="interaction">
    <interactant intactId="EBI-6162776">
        <id>Q95107</id>
    </interactant>
    <interactant intactId="EBI-6162776">
        <id>Q95107</id>
        <label>WASL</label>
    </interactant>
    <organismsDiffer>false</organismsDiffer>
    <experiments>3</experiments>
</comment>
<comment type="interaction">
    <interactant intactId="EBI-6162776">
        <id>Q95107</id>
    </interactant>
    <interactant intactId="EBI-397955">
        <id>Q60598</id>
        <label>Cttn</label>
    </interactant>
    <organismsDiffer>true</organismsDiffer>
    <experiments>2</experiments>
</comment>
<comment type="subcellular location">
    <subcellularLocation>
        <location evidence="1">Cytoplasm</location>
        <location evidence="1">Cytoskeleton</location>
    </subcellularLocation>
    <subcellularLocation>
        <location evidence="1">Nucleus</location>
    </subcellularLocation>
    <subcellularLocation>
        <location evidence="2">Cytoplasm</location>
    </subcellularLocation>
    <text evidence="2">Preferentially localized in the cytoplasm when phosphorylated and in the nucleus when unphosphorylated. Exported from the nucleus by an nuclear export signal (NES)-dependent mechanism to the cytoplasm.</text>
</comment>
<comment type="PTM">
    <text evidence="1">Phosphorylation at Ser-242, Tyr-256, Ser-484 and Ser-485 enhances actin polymerization activity.</text>
</comment>
<feature type="initiator methionine" description="Removed" evidence="1">
    <location>
        <position position="1"/>
    </location>
</feature>
<feature type="chain" id="PRO_0000188999" description="Actin nucleation-promoting factor WASL">
    <location>
        <begin position="2"/>
        <end position="505"/>
    </location>
</feature>
<feature type="domain" description="WH1" evidence="5">
    <location>
        <begin position="34"/>
        <end position="141"/>
    </location>
</feature>
<feature type="domain" description="CRIB" evidence="3">
    <location>
        <begin position="203"/>
        <end position="216"/>
    </location>
</feature>
<feature type="domain" description="WH2 1" evidence="4">
    <location>
        <begin position="405"/>
        <end position="422"/>
    </location>
</feature>
<feature type="domain" description="WH2 2" evidence="4">
    <location>
        <begin position="433"/>
        <end position="450"/>
    </location>
</feature>
<feature type="region of interest" description="Disordered" evidence="6">
    <location>
        <begin position="138"/>
        <end position="163"/>
    </location>
</feature>
<feature type="region of interest" description="Disordered" evidence="6">
    <location>
        <begin position="185"/>
        <end position="205"/>
    </location>
</feature>
<feature type="region of interest" description="Disordered" evidence="6">
    <location>
        <begin position="266"/>
        <end position="406"/>
    </location>
</feature>
<feature type="region of interest" description="Disordered" evidence="6">
    <location>
        <begin position="449"/>
        <end position="468"/>
    </location>
</feature>
<feature type="region of interest" description="Disordered" evidence="6">
    <location>
        <begin position="477"/>
        <end position="505"/>
    </location>
</feature>
<feature type="compositionally biased region" description="Basic residues" evidence="6">
    <location>
        <begin position="186"/>
        <end position="198"/>
    </location>
</feature>
<feature type="compositionally biased region" description="Pro residues" evidence="6">
    <location>
        <begin position="276"/>
        <end position="349"/>
    </location>
</feature>
<feature type="compositionally biased region" description="Pro residues" evidence="6">
    <location>
        <begin position="356"/>
        <end position="365"/>
    </location>
</feature>
<feature type="compositionally biased region" description="Pro residues" evidence="6">
    <location>
        <begin position="372"/>
        <end position="391"/>
    </location>
</feature>
<feature type="compositionally biased region" description="Acidic residues" evidence="6">
    <location>
        <begin position="486"/>
        <end position="505"/>
    </location>
</feature>
<feature type="modified residue" description="N-acetylserine" evidence="1">
    <location>
        <position position="2"/>
    </location>
</feature>
<feature type="modified residue" description="Phosphoserine; by TNK2" evidence="1">
    <location>
        <position position="242"/>
    </location>
</feature>
<feature type="modified residue" description="Phosphotyrosine; by FAK1 and TNK2" evidence="1">
    <location>
        <position position="256"/>
    </location>
</feature>
<feature type="modified residue" description="Omega-N-methylarginine" evidence="1">
    <location>
        <position position="307"/>
    </location>
</feature>
<feature type="modified residue" description="Phosphoserine" evidence="1">
    <location>
        <position position="484"/>
    </location>
</feature>
<feature type="modified residue" description="Phosphoserine" evidence="1">
    <location>
        <position position="485"/>
    </location>
</feature>
<keyword id="KW-0007">Acetylation</keyword>
<keyword id="KW-0009">Actin-binding</keyword>
<keyword id="KW-0131">Cell cycle</keyword>
<keyword id="KW-0132">Cell division</keyword>
<keyword id="KW-0963">Cytoplasm</keyword>
<keyword id="KW-0206">Cytoskeleton</keyword>
<keyword id="KW-0488">Methylation</keyword>
<keyword id="KW-0498">Mitosis</keyword>
<keyword id="KW-0539">Nucleus</keyword>
<keyword id="KW-0597">Phosphoprotein</keyword>
<keyword id="KW-1185">Reference proteome</keyword>
<keyword id="KW-0677">Repeat</keyword>
<keyword id="KW-0804">Transcription</keyword>
<keyword id="KW-0805">Transcription regulation</keyword>
<protein>
    <recommendedName>
        <fullName evidence="8">Actin nucleation-promoting factor WASL</fullName>
    </recommendedName>
    <alternativeName>
        <fullName>Neural Wiskott-Aldrich syndrome protein</fullName>
        <shortName>N-WASP</shortName>
    </alternativeName>
</protein>
<accession>Q95107</accession>
<dbReference type="EMBL" id="D67066">
    <property type="protein sequence ID" value="BAA11082.1"/>
    <property type="molecule type" value="mRNA"/>
</dbReference>
<dbReference type="PIR" id="S72273">
    <property type="entry name" value="S72273"/>
</dbReference>
<dbReference type="RefSeq" id="NP_776644.1">
    <property type="nucleotide sequence ID" value="NM_174219.2"/>
</dbReference>
<dbReference type="BMRB" id="Q95107"/>
<dbReference type="SMR" id="Q95107"/>
<dbReference type="CORUM" id="Q95107"/>
<dbReference type="ELM" id="Q95107"/>
<dbReference type="FunCoup" id="Q95107">
    <property type="interactions" value="2458"/>
</dbReference>
<dbReference type="IntAct" id="Q95107">
    <property type="interactions" value="5"/>
</dbReference>
<dbReference type="STRING" id="9913.ENSBTAP00000006094"/>
<dbReference type="iPTMnet" id="Q95107"/>
<dbReference type="PaxDb" id="9913-ENSBTAP00000006094"/>
<dbReference type="PeptideAtlas" id="Q95107"/>
<dbReference type="Ensembl" id="ENSBTAT00000006094.6">
    <property type="protein sequence ID" value="ENSBTAP00000006094.4"/>
    <property type="gene ID" value="ENSBTAG00000004643.6"/>
</dbReference>
<dbReference type="GeneID" id="281577"/>
<dbReference type="KEGG" id="bta:281577"/>
<dbReference type="CTD" id="8976"/>
<dbReference type="VEuPathDB" id="HostDB:ENSBTAG00000004643"/>
<dbReference type="VGNC" id="VGNC:56336">
    <property type="gene designation" value="WASL"/>
</dbReference>
<dbReference type="eggNOG" id="KOG3671">
    <property type="taxonomic scope" value="Eukaryota"/>
</dbReference>
<dbReference type="GeneTree" id="ENSGT00730000110895"/>
<dbReference type="HOGENOM" id="CLU_015385_3_1_1"/>
<dbReference type="InParanoid" id="Q95107"/>
<dbReference type="OMA" id="EYNQDRK"/>
<dbReference type="OrthoDB" id="8963340at2759"/>
<dbReference type="TreeFam" id="TF316736"/>
<dbReference type="Reactome" id="R-BTA-2029482">
    <property type="pathway name" value="Regulation of actin dynamics for phagocytic cup formation"/>
</dbReference>
<dbReference type="Reactome" id="R-BTA-203641">
    <property type="pathway name" value="NOSTRIN mediated eNOS trafficking"/>
</dbReference>
<dbReference type="Reactome" id="R-BTA-373753">
    <property type="pathway name" value="Nephrin family interactions"/>
</dbReference>
<dbReference type="Reactome" id="R-BTA-3928662">
    <property type="pathway name" value="EPHB-mediated forward signaling"/>
</dbReference>
<dbReference type="Reactome" id="R-BTA-418885">
    <property type="pathway name" value="DCC mediated attractive signaling"/>
</dbReference>
<dbReference type="Reactome" id="R-BTA-5663213">
    <property type="pathway name" value="RHO GTPases Activate WASPs and WAVEs"/>
</dbReference>
<dbReference type="Reactome" id="R-BTA-8856828">
    <property type="pathway name" value="Clathrin-mediated endocytosis"/>
</dbReference>
<dbReference type="Reactome" id="R-BTA-9013406">
    <property type="pathway name" value="RHOQ GTPase cycle"/>
</dbReference>
<dbReference type="Reactome" id="R-BTA-9013424">
    <property type="pathway name" value="RHOV GTPase cycle"/>
</dbReference>
<dbReference type="EvolutionaryTrace" id="Q95107"/>
<dbReference type="Proteomes" id="UP000009136">
    <property type="component" value="Chromosome 4"/>
</dbReference>
<dbReference type="Bgee" id="ENSBTAG00000004643">
    <property type="expression patterns" value="Expressed in occipital lobe and 103 other cell types or tissues"/>
</dbReference>
<dbReference type="GO" id="GO:0005856">
    <property type="term" value="C:cytoskeleton"/>
    <property type="evidence" value="ECO:0007669"/>
    <property type="project" value="UniProtKB-SubCell"/>
</dbReference>
<dbReference type="GO" id="GO:0005789">
    <property type="term" value="C:endoplasmic reticulum membrane"/>
    <property type="evidence" value="ECO:0000318"/>
    <property type="project" value="GO_Central"/>
</dbReference>
<dbReference type="GO" id="GO:0005634">
    <property type="term" value="C:nucleus"/>
    <property type="evidence" value="ECO:0000250"/>
    <property type="project" value="UniProtKB"/>
</dbReference>
<dbReference type="GO" id="GO:0003779">
    <property type="term" value="F:actin binding"/>
    <property type="evidence" value="ECO:0007669"/>
    <property type="project" value="UniProtKB-KW"/>
</dbReference>
<dbReference type="GO" id="GO:0042802">
    <property type="term" value="F:identical protein binding"/>
    <property type="evidence" value="ECO:0000353"/>
    <property type="project" value="IntAct"/>
</dbReference>
<dbReference type="GO" id="GO:0030036">
    <property type="term" value="P:actin cytoskeleton organization"/>
    <property type="evidence" value="ECO:0000318"/>
    <property type="project" value="GO_Central"/>
</dbReference>
<dbReference type="GO" id="GO:0030041">
    <property type="term" value="P:actin filament polymerization"/>
    <property type="evidence" value="ECO:0000250"/>
    <property type="project" value="UniProtKB"/>
</dbReference>
<dbReference type="GO" id="GO:0051301">
    <property type="term" value="P:cell division"/>
    <property type="evidence" value="ECO:0007669"/>
    <property type="project" value="UniProtKB-KW"/>
</dbReference>
<dbReference type="GO" id="GO:0060997">
    <property type="term" value="P:dendritic spine morphogenesis"/>
    <property type="evidence" value="ECO:0000250"/>
    <property type="project" value="UniProtKB"/>
</dbReference>
<dbReference type="GO" id="GO:0045944">
    <property type="term" value="P:positive regulation of transcription by RNA polymerase II"/>
    <property type="evidence" value="ECO:0000250"/>
    <property type="project" value="UniProtKB"/>
</dbReference>
<dbReference type="CDD" id="cd00132">
    <property type="entry name" value="CRIB"/>
    <property type="match status" value="1"/>
</dbReference>
<dbReference type="CDD" id="cd01205">
    <property type="entry name" value="EVH1_WASP-like"/>
    <property type="match status" value="1"/>
</dbReference>
<dbReference type="CDD" id="cd22075">
    <property type="entry name" value="WH2_hN-WASP_r2_like"/>
    <property type="match status" value="1"/>
</dbReference>
<dbReference type="CDD" id="cd22074">
    <property type="entry name" value="WH2_N-WASP_r1"/>
    <property type="match status" value="1"/>
</dbReference>
<dbReference type="FunFam" id="3.90.810.10:FF:000006">
    <property type="entry name" value="Neural Wiskott-Aldrich syndrome protein"/>
    <property type="match status" value="1"/>
</dbReference>
<dbReference type="FunFam" id="2.30.29.30:FF:000130">
    <property type="entry name" value="neural Wiskott-Aldrich syndrome protein"/>
    <property type="match status" value="1"/>
</dbReference>
<dbReference type="FunFam" id="3.90.810.10:FF:000003">
    <property type="entry name" value="Neural Wiskott-Aldrich syndrome protein-like"/>
    <property type="match status" value="1"/>
</dbReference>
<dbReference type="Gene3D" id="3.90.810.10">
    <property type="entry name" value="CRIB domain"/>
    <property type="match status" value="2"/>
</dbReference>
<dbReference type="Gene3D" id="2.30.29.30">
    <property type="entry name" value="Pleckstrin-homology domain (PH domain)/Phosphotyrosine-binding domain (PTB)"/>
    <property type="match status" value="1"/>
</dbReference>
<dbReference type="InterPro" id="IPR000095">
    <property type="entry name" value="CRIB_dom"/>
</dbReference>
<dbReference type="InterPro" id="IPR036936">
    <property type="entry name" value="CRIB_dom_sf"/>
</dbReference>
<dbReference type="InterPro" id="IPR011993">
    <property type="entry name" value="PH-like_dom_sf"/>
</dbReference>
<dbReference type="InterPro" id="IPR011026">
    <property type="entry name" value="WAS_C"/>
</dbReference>
<dbReference type="InterPro" id="IPR033927">
    <property type="entry name" value="WASPfam_EVH1"/>
</dbReference>
<dbReference type="InterPro" id="IPR000697">
    <property type="entry name" value="WH1/EVH1_dom"/>
</dbReference>
<dbReference type="InterPro" id="IPR003124">
    <property type="entry name" value="WH2_dom"/>
</dbReference>
<dbReference type="PANTHER" id="PTHR11202:SF36">
    <property type="entry name" value="ACTIN NUCLEATION-PROMOTING FACTOR WASL"/>
    <property type="match status" value="1"/>
</dbReference>
<dbReference type="PANTHER" id="PTHR11202">
    <property type="entry name" value="SPROUTY-RELATED, EVH1 DOMAIN-CONTAINING PROTEIN FAMILY MEMBER"/>
    <property type="match status" value="1"/>
</dbReference>
<dbReference type="Pfam" id="PF00786">
    <property type="entry name" value="PBD"/>
    <property type="match status" value="1"/>
</dbReference>
<dbReference type="Pfam" id="PF00568">
    <property type="entry name" value="WH1"/>
    <property type="match status" value="1"/>
</dbReference>
<dbReference type="Pfam" id="PF02205">
    <property type="entry name" value="WH2"/>
    <property type="match status" value="2"/>
</dbReference>
<dbReference type="SMART" id="SM00285">
    <property type="entry name" value="PBD"/>
    <property type="match status" value="1"/>
</dbReference>
<dbReference type="SMART" id="SM00461">
    <property type="entry name" value="WH1"/>
    <property type="match status" value="1"/>
</dbReference>
<dbReference type="SMART" id="SM00246">
    <property type="entry name" value="WH2"/>
    <property type="match status" value="2"/>
</dbReference>
<dbReference type="SUPFAM" id="SSF50729">
    <property type="entry name" value="PH domain-like"/>
    <property type="match status" value="1"/>
</dbReference>
<dbReference type="SUPFAM" id="SSF47912">
    <property type="entry name" value="Wiscott-Aldrich syndrome protein, WASP, C-terminal domain"/>
    <property type="match status" value="2"/>
</dbReference>
<dbReference type="PROSITE" id="PS50108">
    <property type="entry name" value="CRIB"/>
    <property type="match status" value="1"/>
</dbReference>
<dbReference type="PROSITE" id="PS50229">
    <property type="entry name" value="WH1"/>
    <property type="match status" value="1"/>
</dbReference>
<dbReference type="PROSITE" id="PS51082">
    <property type="entry name" value="WH2"/>
    <property type="match status" value="2"/>
</dbReference>
<organism>
    <name type="scientific">Bos taurus</name>
    <name type="common">Bovine</name>
    <dbReference type="NCBI Taxonomy" id="9913"/>
    <lineage>
        <taxon>Eukaryota</taxon>
        <taxon>Metazoa</taxon>
        <taxon>Chordata</taxon>
        <taxon>Craniata</taxon>
        <taxon>Vertebrata</taxon>
        <taxon>Euteleostomi</taxon>
        <taxon>Mammalia</taxon>
        <taxon>Eutheria</taxon>
        <taxon>Laurasiatheria</taxon>
        <taxon>Artiodactyla</taxon>
        <taxon>Ruminantia</taxon>
        <taxon>Pecora</taxon>
        <taxon>Bovidae</taxon>
        <taxon>Bovinae</taxon>
        <taxon>Bos</taxon>
    </lineage>
</organism>
<reference key="1">
    <citation type="journal article" date="1996" name="EMBO J.">
        <title>N-WASP, a novel actin-depolymerizing protein, regulates the cortical cytoskeletal rearrangement in a PIP2-dependent manner downstream of tyrosine kinases.</title>
        <authorList>
            <person name="Miki H."/>
            <person name="Miura K."/>
            <person name="Takenawa T."/>
        </authorList>
    </citation>
    <scope>NUCLEOTIDE SEQUENCE [MRNA]</scope>
    <source>
        <tissue>Brain</tissue>
    </source>
</reference>
<reference key="2">
    <citation type="journal article" date="2007" name="Dev. Cell">
        <title>SNX9 couples actin assembly to phosphoinositide signals and is required for membrane remodeling during endocytosis.</title>
        <authorList>
            <person name="Yarar D."/>
            <person name="Waterman-Storer C.M."/>
            <person name="Schmid S.L."/>
        </authorList>
    </citation>
    <scope>FUNCTION</scope>
    <scope>INTERACTION WITH SNX9</scope>
</reference>
<gene>
    <name type="primary">WASL</name>
</gene>